<sequence>MLVLASASPRRREILSRFIRDFHVVPSNAEERCSGTPEECAVELARLKAREVYSRVGGTVIGADTVVSIDGRVLGKPSDEGEAYRMLKLLSGRVHRVTTGYCIIHEGKEIAGSATTEVKFRELDDELIWAYIRTGEPMDKAGAYGIQGKAGLFVEWIRGDYYNVVGFPMEIIWKLRELGFEVLSR</sequence>
<proteinExistence type="inferred from homology"/>
<accession>C5A216</accession>
<gene>
    <name type="ordered locus">TGAM_1933</name>
</gene>
<keyword id="KW-0963">Cytoplasm</keyword>
<keyword id="KW-0378">Hydrolase</keyword>
<keyword id="KW-0546">Nucleotide metabolism</keyword>
<keyword id="KW-1185">Reference proteome</keyword>
<protein>
    <recommendedName>
        <fullName evidence="1">dTTP/UTP pyrophosphatase</fullName>
        <shortName evidence="1">dTTPase/UTPase</shortName>
        <ecNumber evidence="1">3.6.1.9</ecNumber>
    </recommendedName>
    <alternativeName>
        <fullName evidence="1">Nucleoside triphosphate pyrophosphatase</fullName>
    </alternativeName>
    <alternativeName>
        <fullName evidence="1">Nucleotide pyrophosphatase</fullName>
        <shortName evidence="1">Nucleotide PPase</shortName>
    </alternativeName>
</protein>
<name>NTPPA_THEGJ</name>
<dbReference type="EC" id="3.6.1.9" evidence="1"/>
<dbReference type="EMBL" id="CP001398">
    <property type="protein sequence ID" value="ACS34435.1"/>
    <property type="molecule type" value="Genomic_DNA"/>
</dbReference>
<dbReference type="RefSeq" id="WP_015859541.1">
    <property type="nucleotide sequence ID" value="NC_012804.1"/>
</dbReference>
<dbReference type="SMR" id="C5A216"/>
<dbReference type="STRING" id="593117.TGAM_1933"/>
<dbReference type="PaxDb" id="593117-TGAM_1933"/>
<dbReference type="GeneID" id="7988337"/>
<dbReference type="KEGG" id="tga:TGAM_1933"/>
<dbReference type="PATRIC" id="fig|593117.10.peg.1943"/>
<dbReference type="eggNOG" id="arCOG05007">
    <property type="taxonomic scope" value="Archaea"/>
</dbReference>
<dbReference type="HOGENOM" id="CLU_040416_0_0_2"/>
<dbReference type="OrthoDB" id="45223at2157"/>
<dbReference type="Proteomes" id="UP000001488">
    <property type="component" value="Chromosome"/>
</dbReference>
<dbReference type="GO" id="GO:0005737">
    <property type="term" value="C:cytoplasm"/>
    <property type="evidence" value="ECO:0007669"/>
    <property type="project" value="UniProtKB-SubCell"/>
</dbReference>
<dbReference type="GO" id="GO:0036218">
    <property type="term" value="F:dTTP diphosphatase activity"/>
    <property type="evidence" value="ECO:0007669"/>
    <property type="project" value="RHEA"/>
</dbReference>
<dbReference type="GO" id="GO:0036221">
    <property type="term" value="F:UTP diphosphatase activity"/>
    <property type="evidence" value="ECO:0007669"/>
    <property type="project" value="RHEA"/>
</dbReference>
<dbReference type="GO" id="GO:0009117">
    <property type="term" value="P:nucleotide metabolic process"/>
    <property type="evidence" value="ECO:0007669"/>
    <property type="project" value="UniProtKB-KW"/>
</dbReference>
<dbReference type="CDD" id="cd00555">
    <property type="entry name" value="Maf"/>
    <property type="match status" value="1"/>
</dbReference>
<dbReference type="Gene3D" id="3.90.950.10">
    <property type="match status" value="1"/>
</dbReference>
<dbReference type="HAMAP" id="MF_00528">
    <property type="entry name" value="Maf"/>
    <property type="match status" value="1"/>
</dbReference>
<dbReference type="InterPro" id="IPR029001">
    <property type="entry name" value="ITPase-like_fam"/>
</dbReference>
<dbReference type="InterPro" id="IPR003697">
    <property type="entry name" value="Maf-like"/>
</dbReference>
<dbReference type="NCBIfam" id="TIGR00172">
    <property type="entry name" value="maf"/>
    <property type="match status" value="1"/>
</dbReference>
<dbReference type="PANTHER" id="PTHR43213">
    <property type="entry name" value="BIFUNCTIONAL DTTP/UTP PYROPHOSPHATASE/METHYLTRANSFERASE PROTEIN-RELATED"/>
    <property type="match status" value="1"/>
</dbReference>
<dbReference type="PANTHER" id="PTHR43213:SF5">
    <property type="entry name" value="BIFUNCTIONAL DTTP_UTP PYROPHOSPHATASE_METHYLTRANSFERASE PROTEIN-RELATED"/>
    <property type="match status" value="1"/>
</dbReference>
<dbReference type="Pfam" id="PF02545">
    <property type="entry name" value="Maf"/>
    <property type="match status" value="1"/>
</dbReference>
<dbReference type="PIRSF" id="PIRSF006305">
    <property type="entry name" value="Maf"/>
    <property type="match status" value="1"/>
</dbReference>
<dbReference type="SUPFAM" id="SSF52972">
    <property type="entry name" value="ITPase-like"/>
    <property type="match status" value="1"/>
</dbReference>
<evidence type="ECO:0000255" key="1">
    <source>
        <dbReference type="HAMAP-Rule" id="MF_00528"/>
    </source>
</evidence>
<feature type="chain" id="PRO_1000211775" description="dTTP/UTP pyrophosphatase">
    <location>
        <begin position="1"/>
        <end position="185"/>
    </location>
</feature>
<feature type="active site" description="Proton acceptor" evidence="1">
    <location>
        <position position="64"/>
    </location>
</feature>
<feature type="site" description="Important for substrate specificity" evidence="1">
    <location>
        <position position="10"/>
    </location>
</feature>
<feature type="site" description="Important for substrate specificity" evidence="1">
    <location>
        <position position="65"/>
    </location>
</feature>
<feature type="site" description="Important for substrate specificity" evidence="1">
    <location>
        <position position="147"/>
    </location>
</feature>
<comment type="function">
    <text evidence="1">Nucleoside triphosphate pyrophosphatase that hydrolyzes dTTP and UTP. May have a dual role in cell division arrest and in preventing the incorporation of modified nucleotides into cellular nucleic acids.</text>
</comment>
<comment type="catalytic activity">
    <reaction evidence="1">
        <text>dTTP + H2O = dTMP + diphosphate + H(+)</text>
        <dbReference type="Rhea" id="RHEA:28534"/>
        <dbReference type="ChEBI" id="CHEBI:15377"/>
        <dbReference type="ChEBI" id="CHEBI:15378"/>
        <dbReference type="ChEBI" id="CHEBI:33019"/>
        <dbReference type="ChEBI" id="CHEBI:37568"/>
        <dbReference type="ChEBI" id="CHEBI:63528"/>
        <dbReference type="EC" id="3.6.1.9"/>
    </reaction>
</comment>
<comment type="catalytic activity">
    <reaction evidence="1">
        <text>UTP + H2O = UMP + diphosphate + H(+)</text>
        <dbReference type="Rhea" id="RHEA:29395"/>
        <dbReference type="ChEBI" id="CHEBI:15377"/>
        <dbReference type="ChEBI" id="CHEBI:15378"/>
        <dbReference type="ChEBI" id="CHEBI:33019"/>
        <dbReference type="ChEBI" id="CHEBI:46398"/>
        <dbReference type="ChEBI" id="CHEBI:57865"/>
        <dbReference type="EC" id="3.6.1.9"/>
    </reaction>
</comment>
<comment type="cofactor">
    <cofactor evidence="1">
        <name>a divalent metal cation</name>
        <dbReference type="ChEBI" id="CHEBI:60240"/>
    </cofactor>
</comment>
<comment type="subcellular location">
    <subcellularLocation>
        <location evidence="1">Cytoplasm</location>
    </subcellularLocation>
</comment>
<comment type="similarity">
    <text evidence="1">Belongs to the Maf family. YhdE subfamily.</text>
</comment>
<organism>
    <name type="scientific">Thermococcus gammatolerans (strain DSM 15229 / JCM 11827 / EJ3)</name>
    <dbReference type="NCBI Taxonomy" id="593117"/>
    <lineage>
        <taxon>Archaea</taxon>
        <taxon>Methanobacteriati</taxon>
        <taxon>Methanobacteriota</taxon>
        <taxon>Thermococci</taxon>
        <taxon>Thermococcales</taxon>
        <taxon>Thermococcaceae</taxon>
        <taxon>Thermococcus</taxon>
    </lineage>
</organism>
<reference key="1">
    <citation type="journal article" date="2007" name="Genome Biol.">
        <title>Genome analysis and genome-wide proteomics of Thermococcus gammatolerans, the most radioresistant organism known amongst the Archaea.</title>
        <authorList>
            <person name="Zivanovic Y."/>
            <person name="Armengaud J."/>
            <person name="Lagorce A."/>
            <person name="Leplat C."/>
            <person name="Guerin P."/>
            <person name="Dutertre M."/>
            <person name="Anthouard V."/>
            <person name="Forterre P."/>
            <person name="Wincker P."/>
            <person name="Confalonieri F."/>
        </authorList>
    </citation>
    <scope>NUCLEOTIDE SEQUENCE [LARGE SCALE GENOMIC DNA]</scope>
    <source>
        <strain>DSM 15229 / JCM 11827 / EJ3</strain>
    </source>
</reference>